<keyword id="KW-1185">Reference proteome</keyword>
<keyword id="KW-0687">Ribonucleoprotein</keyword>
<keyword id="KW-0689">Ribosomal protein</keyword>
<sequence>MAKAAKTIKLEQTGSAIRRHHSQRSTLIGLKLNKIGRTSELPDTPAVRGMIEKVHHLVRIVDEK</sequence>
<feature type="chain" id="PRO_0000273755" description="Large ribosomal subunit protein uL30">
    <location>
        <begin position="1"/>
        <end position="64"/>
    </location>
</feature>
<comment type="subunit">
    <text evidence="1">Part of the 50S ribosomal subunit.</text>
</comment>
<comment type="similarity">
    <text evidence="1">Belongs to the universal ribosomal protein uL30 family.</text>
</comment>
<accession>Q89JA2</accession>
<organism>
    <name type="scientific">Bradyrhizobium diazoefficiens (strain JCM 10833 / BCRC 13528 / IAM 13628 / NBRC 14792 / USDA 110)</name>
    <dbReference type="NCBI Taxonomy" id="224911"/>
    <lineage>
        <taxon>Bacteria</taxon>
        <taxon>Pseudomonadati</taxon>
        <taxon>Pseudomonadota</taxon>
        <taxon>Alphaproteobacteria</taxon>
        <taxon>Hyphomicrobiales</taxon>
        <taxon>Nitrobacteraceae</taxon>
        <taxon>Bradyrhizobium</taxon>
    </lineage>
</organism>
<reference key="1">
    <citation type="journal article" date="2002" name="DNA Res.">
        <title>Complete genomic sequence of nitrogen-fixing symbiotic bacterium Bradyrhizobium japonicum USDA110.</title>
        <authorList>
            <person name="Kaneko T."/>
            <person name="Nakamura Y."/>
            <person name="Sato S."/>
            <person name="Minamisawa K."/>
            <person name="Uchiumi T."/>
            <person name="Sasamoto S."/>
            <person name="Watanabe A."/>
            <person name="Idesawa K."/>
            <person name="Iriguchi M."/>
            <person name="Kawashima K."/>
            <person name="Kohara M."/>
            <person name="Matsumoto M."/>
            <person name="Shimpo S."/>
            <person name="Tsuruoka H."/>
            <person name="Wada T."/>
            <person name="Yamada M."/>
            <person name="Tabata S."/>
        </authorList>
    </citation>
    <scope>NUCLEOTIDE SEQUENCE [LARGE SCALE GENOMIC DNA]</scope>
    <source>
        <strain>JCM 10833 / BCRC 13528 / IAM 13628 / NBRC 14792 / USDA 110</strain>
    </source>
</reference>
<name>RL30_BRADU</name>
<dbReference type="EMBL" id="BA000040">
    <property type="protein sequence ID" value="BAC50647.1"/>
    <property type="molecule type" value="Genomic_DNA"/>
</dbReference>
<dbReference type="RefSeq" id="NP_772022.1">
    <property type="nucleotide sequence ID" value="NC_004463.1"/>
</dbReference>
<dbReference type="RefSeq" id="WP_011088137.1">
    <property type="nucleotide sequence ID" value="NZ_CP011360.1"/>
</dbReference>
<dbReference type="SMR" id="Q89JA2"/>
<dbReference type="FunCoup" id="Q89JA2">
    <property type="interactions" value="480"/>
</dbReference>
<dbReference type="STRING" id="224911.AAV28_24320"/>
<dbReference type="EnsemblBacteria" id="BAC50647">
    <property type="protein sequence ID" value="BAC50647"/>
    <property type="gene ID" value="BAC50647"/>
</dbReference>
<dbReference type="GeneID" id="64070593"/>
<dbReference type="KEGG" id="bja:bsl5382"/>
<dbReference type="PATRIC" id="fig|224911.44.peg.5281"/>
<dbReference type="eggNOG" id="COG1841">
    <property type="taxonomic scope" value="Bacteria"/>
</dbReference>
<dbReference type="HOGENOM" id="CLU_131047_1_2_5"/>
<dbReference type="InParanoid" id="Q89JA2"/>
<dbReference type="OrthoDB" id="9812790at2"/>
<dbReference type="PhylomeDB" id="Q89JA2"/>
<dbReference type="Proteomes" id="UP000002526">
    <property type="component" value="Chromosome"/>
</dbReference>
<dbReference type="GO" id="GO:0022625">
    <property type="term" value="C:cytosolic large ribosomal subunit"/>
    <property type="evidence" value="ECO:0000318"/>
    <property type="project" value="GO_Central"/>
</dbReference>
<dbReference type="GO" id="GO:0003735">
    <property type="term" value="F:structural constituent of ribosome"/>
    <property type="evidence" value="ECO:0007669"/>
    <property type="project" value="InterPro"/>
</dbReference>
<dbReference type="GO" id="GO:0006412">
    <property type="term" value="P:translation"/>
    <property type="evidence" value="ECO:0007669"/>
    <property type="project" value="UniProtKB-UniRule"/>
</dbReference>
<dbReference type="CDD" id="cd01658">
    <property type="entry name" value="Ribosomal_L30"/>
    <property type="match status" value="1"/>
</dbReference>
<dbReference type="FunFam" id="3.30.1390.20:FF:000014">
    <property type="entry name" value="50S ribosomal protein L30"/>
    <property type="match status" value="1"/>
</dbReference>
<dbReference type="Gene3D" id="3.30.1390.20">
    <property type="entry name" value="Ribosomal protein L30, ferredoxin-like fold domain"/>
    <property type="match status" value="1"/>
</dbReference>
<dbReference type="HAMAP" id="MF_01371_B">
    <property type="entry name" value="Ribosomal_uL30_B"/>
    <property type="match status" value="1"/>
</dbReference>
<dbReference type="InterPro" id="IPR036919">
    <property type="entry name" value="Ribo_uL30_ferredoxin-like_sf"/>
</dbReference>
<dbReference type="InterPro" id="IPR005996">
    <property type="entry name" value="Ribosomal_uL30_bac-type"/>
</dbReference>
<dbReference type="InterPro" id="IPR016082">
    <property type="entry name" value="Ribosomal_uL30_ferredoxin-like"/>
</dbReference>
<dbReference type="NCBIfam" id="TIGR01308">
    <property type="entry name" value="rpmD_bact"/>
    <property type="match status" value="1"/>
</dbReference>
<dbReference type="PANTHER" id="PTHR15892:SF2">
    <property type="entry name" value="LARGE RIBOSOMAL SUBUNIT PROTEIN UL30M"/>
    <property type="match status" value="1"/>
</dbReference>
<dbReference type="PANTHER" id="PTHR15892">
    <property type="entry name" value="MITOCHONDRIAL RIBOSOMAL PROTEIN L30"/>
    <property type="match status" value="1"/>
</dbReference>
<dbReference type="Pfam" id="PF00327">
    <property type="entry name" value="Ribosomal_L30"/>
    <property type="match status" value="1"/>
</dbReference>
<dbReference type="PIRSF" id="PIRSF002211">
    <property type="entry name" value="Ribosomal_L30_bac-type"/>
    <property type="match status" value="1"/>
</dbReference>
<dbReference type="SUPFAM" id="SSF55129">
    <property type="entry name" value="Ribosomal protein L30p/L7e"/>
    <property type="match status" value="1"/>
</dbReference>
<evidence type="ECO:0000255" key="1">
    <source>
        <dbReference type="HAMAP-Rule" id="MF_01371"/>
    </source>
</evidence>
<evidence type="ECO:0000305" key="2"/>
<proteinExistence type="inferred from homology"/>
<protein>
    <recommendedName>
        <fullName evidence="1">Large ribosomal subunit protein uL30</fullName>
    </recommendedName>
    <alternativeName>
        <fullName evidence="2">50S ribosomal protein L30</fullName>
    </alternativeName>
</protein>
<gene>
    <name evidence="1" type="primary">rpmD</name>
    <name type="ordered locus">bsl5382</name>
</gene>